<gene>
    <name evidence="1" type="primary">rpsP</name>
    <name type="ordered locus">BT9727_3585</name>
</gene>
<proteinExistence type="inferred from homology"/>
<sequence length="90" mass="10118">MAVKIRLKRMGAKKTPFYRVVVADSRSPRDGRFIEEIGTYNPVAQPAEVKINEEAALKWLGNGAKPSDTVRNLFSNQGIMEKFHLSKQGK</sequence>
<name>RS16_BACHK</name>
<accession>Q6HEX1</accession>
<organism>
    <name type="scientific">Bacillus thuringiensis subsp. konkukian (strain 97-27)</name>
    <dbReference type="NCBI Taxonomy" id="281309"/>
    <lineage>
        <taxon>Bacteria</taxon>
        <taxon>Bacillati</taxon>
        <taxon>Bacillota</taxon>
        <taxon>Bacilli</taxon>
        <taxon>Bacillales</taxon>
        <taxon>Bacillaceae</taxon>
        <taxon>Bacillus</taxon>
        <taxon>Bacillus cereus group</taxon>
    </lineage>
</organism>
<protein>
    <recommendedName>
        <fullName evidence="1">Small ribosomal subunit protein bS16</fullName>
    </recommendedName>
    <alternativeName>
        <fullName evidence="2">30S ribosomal protein S16</fullName>
    </alternativeName>
</protein>
<comment type="similarity">
    <text evidence="1">Belongs to the bacterial ribosomal protein bS16 family.</text>
</comment>
<reference key="1">
    <citation type="journal article" date="2006" name="J. Bacteriol.">
        <title>Pathogenomic sequence analysis of Bacillus cereus and Bacillus thuringiensis isolates closely related to Bacillus anthracis.</title>
        <authorList>
            <person name="Han C.S."/>
            <person name="Xie G."/>
            <person name="Challacombe J.F."/>
            <person name="Altherr M.R."/>
            <person name="Bhotika S.S."/>
            <person name="Bruce D."/>
            <person name="Campbell C.S."/>
            <person name="Campbell M.L."/>
            <person name="Chen J."/>
            <person name="Chertkov O."/>
            <person name="Cleland C."/>
            <person name="Dimitrijevic M."/>
            <person name="Doggett N.A."/>
            <person name="Fawcett J.J."/>
            <person name="Glavina T."/>
            <person name="Goodwin L.A."/>
            <person name="Hill K.K."/>
            <person name="Hitchcock P."/>
            <person name="Jackson P.J."/>
            <person name="Keim P."/>
            <person name="Kewalramani A.R."/>
            <person name="Longmire J."/>
            <person name="Lucas S."/>
            <person name="Malfatti S."/>
            <person name="McMurry K."/>
            <person name="Meincke L.J."/>
            <person name="Misra M."/>
            <person name="Moseman B.L."/>
            <person name="Mundt M."/>
            <person name="Munk A.C."/>
            <person name="Okinaka R.T."/>
            <person name="Parson-Quintana B."/>
            <person name="Reilly L.P."/>
            <person name="Richardson P."/>
            <person name="Robinson D.L."/>
            <person name="Rubin E."/>
            <person name="Saunders E."/>
            <person name="Tapia R."/>
            <person name="Tesmer J.G."/>
            <person name="Thayer N."/>
            <person name="Thompson L.S."/>
            <person name="Tice H."/>
            <person name="Ticknor L.O."/>
            <person name="Wills P.L."/>
            <person name="Brettin T.S."/>
            <person name="Gilna P."/>
        </authorList>
    </citation>
    <scope>NUCLEOTIDE SEQUENCE [LARGE SCALE GENOMIC DNA]</scope>
    <source>
        <strain>97-27</strain>
    </source>
</reference>
<feature type="chain" id="PRO_0000243775" description="Small ribosomal subunit protein bS16">
    <location>
        <begin position="1"/>
        <end position="90"/>
    </location>
</feature>
<dbReference type="EMBL" id="AE017355">
    <property type="protein sequence ID" value="AAT60612.1"/>
    <property type="molecule type" value="Genomic_DNA"/>
</dbReference>
<dbReference type="RefSeq" id="WP_000268750.1">
    <property type="nucleotide sequence ID" value="NC_005957.1"/>
</dbReference>
<dbReference type="RefSeq" id="YP_037905.1">
    <property type="nucleotide sequence ID" value="NC_005957.1"/>
</dbReference>
<dbReference type="SMR" id="Q6HEX1"/>
<dbReference type="GeneID" id="93007268"/>
<dbReference type="KEGG" id="btk:BT9727_3585"/>
<dbReference type="PATRIC" id="fig|281309.8.peg.3823"/>
<dbReference type="HOGENOM" id="CLU_100590_5_0_9"/>
<dbReference type="PRO" id="PR:Q6HEX1"/>
<dbReference type="Proteomes" id="UP000001301">
    <property type="component" value="Chromosome"/>
</dbReference>
<dbReference type="GO" id="GO:0005737">
    <property type="term" value="C:cytoplasm"/>
    <property type="evidence" value="ECO:0007669"/>
    <property type="project" value="UniProtKB-ARBA"/>
</dbReference>
<dbReference type="GO" id="GO:0015935">
    <property type="term" value="C:small ribosomal subunit"/>
    <property type="evidence" value="ECO:0007669"/>
    <property type="project" value="TreeGrafter"/>
</dbReference>
<dbReference type="GO" id="GO:0003735">
    <property type="term" value="F:structural constituent of ribosome"/>
    <property type="evidence" value="ECO:0007669"/>
    <property type="project" value="InterPro"/>
</dbReference>
<dbReference type="GO" id="GO:0006412">
    <property type="term" value="P:translation"/>
    <property type="evidence" value="ECO:0007669"/>
    <property type="project" value="UniProtKB-UniRule"/>
</dbReference>
<dbReference type="FunFam" id="3.30.1320.10:FF:000002">
    <property type="entry name" value="30S ribosomal protein S16"/>
    <property type="match status" value="1"/>
</dbReference>
<dbReference type="Gene3D" id="3.30.1320.10">
    <property type="match status" value="1"/>
</dbReference>
<dbReference type="HAMAP" id="MF_00385">
    <property type="entry name" value="Ribosomal_bS16"/>
    <property type="match status" value="1"/>
</dbReference>
<dbReference type="InterPro" id="IPR000307">
    <property type="entry name" value="Ribosomal_bS16"/>
</dbReference>
<dbReference type="InterPro" id="IPR020592">
    <property type="entry name" value="Ribosomal_bS16_CS"/>
</dbReference>
<dbReference type="InterPro" id="IPR023803">
    <property type="entry name" value="Ribosomal_bS16_dom_sf"/>
</dbReference>
<dbReference type="NCBIfam" id="TIGR00002">
    <property type="entry name" value="S16"/>
    <property type="match status" value="1"/>
</dbReference>
<dbReference type="PANTHER" id="PTHR12919">
    <property type="entry name" value="30S RIBOSOMAL PROTEIN S16"/>
    <property type="match status" value="1"/>
</dbReference>
<dbReference type="PANTHER" id="PTHR12919:SF20">
    <property type="entry name" value="SMALL RIBOSOMAL SUBUNIT PROTEIN BS16M"/>
    <property type="match status" value="1"/>
</dbReference>
<dbReference type="Pfam" id="PF00886">
    <property type="entry name" value="Ribosomal_S16"/>
    <property type="match status" value="1"/>
</dbReference>
<dbReference type="SUPFAM" id="SSF54565">
    <property type="entry name" value="Ribosomal protein S16"/>
    <property type="match status" value="1"/>
</dbReference>
<dbReference type="PROSITE" id="PS00732">
    <property type="entry name" value="RIBOSOMAL_S16"/>
    <property type="match status" value="1"/>
</dbReference>
<keyword id="KW-0687">Ribonucleoprotein</keyword>
<keyword id="KW-0689">Ribosomal protein</keyword>
<evidence type="ECO:0000255" key="1">
    <source>
        <dbReference type="HAMAP-Rule" id="MF_00385"/>
    </source>
</evidence>
<evidence type="ECO:0000305" key="2"/>